<sequence>MRLLRRRHMSLRLAMLGSVFMLFLFIRQKDVSNQEQAMEKPWLKSLAGQKDQVLDFMLGAVNNIRDVMPKLQIRAPEPPQTLVSTNHSCLPGFYTPAELKPFWDRPPQDPNSPGADGKAFQKKEWTNLETKEKEEGYKKHCFNAFASDRISLQRSLGPDTRPPECVDQKFRRCPPLPTTSVIIVFHNEAWSTLLRTVYSVLHTSPAILLKEIILVDDASTDEHLKERLEQYVQQLQIVRVVRQRERKGLITARLLGASVAQAEVLTFLDAHCECFHGWLEPLLARIAEDKTAVVSPDIVTIDLNTFQFSRPVQRGKAHSRGNFDWSLTFGWEMLPEHEKQRRKDETYPIKSPTFAGGLFSISKAYFEHIGTYDNQMEIWGGENVEMSFRVWQCGGQLEIIPCSVVGHVFRTKSPHTFPKGTSVIARNQVRLAEVWMDDYKKIFYRRNLQAAKMVQENNFGDISERLRLREQLRCHNFSWYLHNVYPEMFVPDLNPTFYGAIKNLGTNQCLDVGENNRGGKPLIMYVCHNLGGNQYFEYTSQRDLRHNIGKQLCLHASGSTLGLRSCQFVGKNSRVPKDEEWELTQDQLIRNSGSGTCLTSQDKKPAMAPCNPRDPYQLWLFV</sequence>
<name>GALT6_MOUSE</name>
<evidence type="ECO:0000250" key="1">
    <source>
        <dbReference type="UniProtKB" id="H0ZAB5"/>
    </source>
</evidence>
<evidence type="ECO:0000250" key="2">
    <source>
        <dbReference type="UniProtKB" id="O08912"/>
    </source>
</evidence>
<evidence type="ECO:0000250" key="3">
    <source>
        <dbReference type="UniProtKB" id="Q14435"/>
    </source>
</evidence>
<evidence type="ECO:0000250" key="4">
    <source>
        <dbReference type="UniProtKB" id="Q8N4A0"/>
    </source>
</evidence>
<evidence type="ECO:0000250" key="5">
    <source>
        <dbReference type="UniProtKB" id="Q8NCL4"/>
    </source>
</evidence>
<evidence type="ECO:0000255" key="6"/>
<evidence type="ECO:0000255" key="7">
    <source>
        <dbReference type="PROSITE-ProRule" id="PRU00174"/>
    </source>
</evidence>
<evidence type="ECO:0000305" key="8"/>
<feature type="chain" id="PRO_0000059115" description="Polypeptide N-acetylgalactosaminyltransferase 6">
    <location>
        <begin position="1"/>
        <end position="622"/>
    </location>
</feature>
<feature type="topological domain" description="Cytoplasmic" evidence="6">
    <location>
        <begin position="1"/>
        <end position="8"/>
    </location>
</feature>
<feature type="transmembrane region" description="Helical; Signal-anchor for type II membrane protein" evidence="6">
    <location>
        <begin position="9"/>
        <end position="28"/>
    </location>
</feature>
<feature type="topological domain" description="Lumenal" evidence="6">
    <location>
        <begin position="29"/>
        <end position="622"/>
    </location>
</feature>
<feature type="domain" description="Ricin B-type lectin" evidence="7">
    <location>
        <begin position="506"/>
        <end position="622"/>
    </location>
</feature>
<feature type="region of interest" description="Catalytic subdomain A">
    <location>
        <begin position="176"/>
        <end position="285"/>
    </location>
</feature>
<feature type="region of interest" description="Catalytic subdomain B">
    <location>
        <begin position="348"/>
        <end position="410"/>
    </location>
</feature>
<feature type="binding site" evidence="1">
    <location>
        <position position="269"/>
    </location>
    <ligand>
        <name>Mn(2+)</name>
        <dbReference type="ChEBI" id="CHEBI:29035"/>
    </ligand>
</feature>
<feature type="binding site" evidence="1">
    <location>
        <position position="271"/>
    </location>
    <ligand>
        <name>Mn(2+)</name>
        <dbReference type="ChEBI" id="CHEBI:29035"/>
    </ligand>
</feature>
<feature type="binding site" evidence="1">
    <location>
        <position position="407"/>
    </location>
    <ligand>
        <name>Mn(2+)</name>
        <dbReference type="ChEBI" id="CHEBI:29035"/>
    </ligand>
</feature>
<feature type="binding site" evidence="1">
    <location>
        <position position="511"/>
    </location>
    <ligand>
        <name>UDP-N-acetyl-alpha-D-galactosamine</name>
        <dbReference type="ChEBI" id="CHEBI:67138"/>
    </ligand>
</feature>
<feature type="binding site" evidence="1">
    <location>
        <position position="514"/>
    </location>
    <ligand>
        <name>UDP-N-acetyl-alpha-D-galactosamine</name>
        <dbReference type="ChEBI" id="CHEBI:67138"/>
    </ligand>
</feature>
<feature type="binding site" evidence="1">
    <location>
        <position position="528"/>
    </location>
    <ligand>
        <name>UDP-N-acetyl-alpha-D-galactosamine</name>
        <dbReference type="ChEBI" id="CHEBI:67138"/>
    </ligand>
</feature>
<feature type="binding site" evidence="1">
    <location>
        <position position="533"/>
    </location>
    <ligand>
        <name>UDP-N-acetyl-alpha-D-galactosamine</name>
        <dbReference type="ChEBI" id="CHEBI:67138"/>
    </ligand>
</feature>
<feature type="glycosylation site" description="N-linked (GlcNAc...) asparagine" evidence="6">
    <location>
        <position position="86"/>
    </location>
</feature>
<feature type="glycosylation site" description="N-linked (GlcNAc...) asparagine" evidence="6">
    <location>
        <position position="476"/>
    </location>
</feature>
<feature type="disulfide bond" evidence="7">
    <location>
        <begin position="509"/>
        <end position="527"/>
    </location>
</feature>
<feature type="disulfide bond" evidence="7">
    <location>
        <begin position="553"/>
        <end position="566"/>
    </location>
</feature>
<feature type="disulfide bond" evidence="7">
    <location>
        <begin position="597"/>
        <end position="610"/>
    </location>
</feature>
<feature type="sequence conflict" description="In Ref. 1; CAB55352." evidence="8" ref="1">
    <original>A</original>
    <variation>T</variation>
    <location>
        <position position="14"/>
    </location>
</feature>
<feature type="sequence conflict" description="In Ref. 1; CAB55352." evidence="8" ref="1">
    <original>K</original>
    <variation>R</variation>
    <location>
        <position position="100"/>
    </location>
</feature>
<feature type="sequence conflict" description="In Ref. 2; BAC25984." evidence="8" ref="2">
    <original>K</original>
    <variation>N</variation>
    <location>
        <position position="210"/>
    </location>
</feature>
<feature type="sequence conflict" description="In Ref. 2; BAC25984." evidence="8" ref="2">
    <original>V</original>
    <variation>M</variation>
    <location>
        <position position="215"/>
    </location>
</feature>
<feature type="sequence conflict" description="In Ref. 2; BAC25984." evidence="8" ref="2">
    <original>K</original>
    <variation>G</variation>
    <location>
        <position position="247"/>
    </location>
</feature>
<feature type="sequence conflict" description="In Ref. 1; CAB55352." evidence="8" ref="1">
    <original>EVLTFLDAHCECF</original>
    <variation>KGAHVSWTPTVSVS</variation>
    <location>
        <begin position="263"/>
        <end position="275"/>
    </location>
</feature>
<feature type="sequence conflict" description="In Ref. 1; CAB55352." evidence="8" ref="1">
    <original>A</original>
    <variation>P</variation>
    <location>
        <position position="292"/>
    </location>
</feature>
<feature type="sequence conflict" description="In Ref. 1; CAB55352." evidence="8" ref="1">
    <original>E</original>
    <variation>Q</variation>
    <location>
        <position position="336"/>
    </location>
</feature>
<feature type="sequence conflict" description="In Ref. 2; BAC25984." evidence="8" ref="2">
    <original>E</original>
    <variation>G</variation>
    <location>
        <position position="398"/>
    </location>
</feature>
<feature type="sequence conflict" description="In Ref. 1; CAB55352." evidence="8" ref="1">
    <original>R</original>
    <variation>Q</variation>
    <location>
        <position position="467"/>
    </location>
</feature>
<feature type="sequence conflict" description="In Ref. 1; CAB55352." evidence="8" ref="1">
    <original>G</original>
    <variation>S</variation>
    <location>
        <position position="562"/>
    </location>
</feature>
<accession>Q8C7U7</accession>
<accession>Q0VE84</accession>
<accession>Q3TWF0</accession>
<accession>Q8CED2</accession>
<accession>Q9QZ16</accession>
<comment type="function">
    <text evidence="5">Catalyzes the initial reaction in O-linked oligosaccharide biosynthesis, the transfer of an N-acetyl-D-galactosamine residue to a serine or threonine residue on the protein receptor. May participate in synthesis of oncofetal fibronectin. Has activity toward Muc1a, Muc2, EA2 and fibronectin peptides (By similarity).</text>
</comment>
<comment type="catalytic activity">
    <reaction evidence="5">
        <text>L-seryl-[protein] + UDP-N-acetyl-alpha-D-galactosamine = a 3-O-[N-acetyl-alpha-D-galactosaminyl]-L-seryl-[protein] + UDP + H(+)</text>
        <dbReference type="Rhea" id="RHEA:23956"/>
        <dbReference type="Rhea" id="RHEA-COMP:9863"/>
        <dbReference type="Rhea" id="RHEA-COMP:12788"/>
        <dbReference type="ChEBI" id="CHEBI:15378"/>
        <dbReference type="ChEBI" id="CHEBI:29999"/>
        <dbReference type="ChEBI" id="CHEBI:53604"/>
        <dbReference type="ChEBI" id="CHEBI:58223"/>
        <dbReference type="ChEBI" id="CHEBI:67138"/>
        <dbReference type="EC" id="2.4.1.41"/>
    </reaction>
</comment>
<comment type="catalytic activity">
    <reaction evidence="5">
        <text>L-threonyl-[protein] + UDP-N-acetyl-alpha-D-galactosamine = a 3-O-[N-acetyl-alpha-D-galactosaminyl]-L-threonyl-[protein] + UDP + H(+)</text>
        <dbReference type="Rhea" id="RHEA:52424"/>
        <dbReference type="Rhea" id="RHEA-COMP:11060"/>
        <dbReference type="Rhea" id="RHEA-COMP:11689"/>
        <dbReference type="ChEBI" id="CHEBI:15378"/>
        <dbReference type="ChEBI" id="CHEBI:30013"/>
        <dbReference type="ChEBI" id="CHEBI:58223"/>
        <dbReference type="ChEBI" id="CHEBI:67138"/>
        <dbReference type="ChEBI" id="CHEBI:87075"/>
        <dbReference type="EC" id="2.4.1.41"/>
    </reaction>
</comment>
<comment type="cofactor">
    <cofactor evidence="3">
        <name>Mn(2+)</name>
        <dbReference type="ChEBI" id="CHEBI:29035"/>
    </cofactor>
</comment>
<comment type="pathway">
    <text>Protein modification; protein glycosylation.</text>
</comment>
<comment type="subcellular location">
    <subcellularLocation>
        <location evidence="3">Golgi apparatus membrane</location>
        <topology evidence="3">Single-pass type II membrane protein</topology>
    </subcellularLocation>
</comment>
<comment type="domain">
    <text evidence="2">There are two conserved domains in the glycosyltransferase region: the N-terminal domain (domain A, also called GT1 motif), which is probably involved in manganese coordination and substrate binding and the C-terminal domain (domain B, also called Gal/GalNAc-T motif), which is probably involved in catalytic reaction and UDP-Gal binding.</text>
</comment>
<comment type="domain">
    <text evidence="4">The ricin B-type lectin domain binds to GalNAc and contributes to the glycopeptide specificity.</text>
</comment>
<comment type="similarity">
    <text evidence="8">Belongs to the glycosyltransferase 2 family. GalNAc-T subfamily.</text>
</comment>
<comment type="sequence caution" evidence="8">
    <conflict type="frameshift">
        <sequence resource="EMBL-CDS" id="CAB55352"/>
    </conflict>
</comment>
<comment type="online information" name="Functional Glycomics Gateway - GTase">
    <link uri="http://www.functionalglycomics.org/glycomics/molecule/jsp/glycoEnzyme/viewGlycoEnzyme.jsp?gbpId=gt_mou_515"/>
    <text>Polypeptide N-acetylgalactosaminyltransferase 6</text>
</comment>
<keyword id="KW-1015">Disulfide bond</keyword>
<keyword id="KW-0325">Glycoprotein</keyword>
<keyword id="KW-0328">Glycosyltransferase</keyword>
<keyword id="KW-0333">Golgi apparatus</keyword>
<keyword id="KW-0430">Lectin</keyword>
<keyword id="KW-0464">Manganese</keyword>
<keyword id="KW-0472">Membrane</keyword>
<keyword id="KW-0479">Metal-binding</keyword>
<keyword id="KW-1185">Reference proteome</keyword>
<keyword id="KW-0735">Signal-anchor</keyword>
<keyword id="KW-0808">Transferase</keyword>
<keyword id="KW-0812">Transmembrane</keyword>
<keyword id="KW-1133">Transmembrane helix</keyword>
<proteinExistence type="evidence at transcript level"/>
<reference key="1">
    <citation type="journal article" date="1999" name="J. Biol. Chem.">
        <title>Cloning and characterization of a close homologue of human UDP-N-acetyl--D-galactosamine:polypeptide N-acetylgalactosaminyltransferase-T3, designated GalNAc-T6. Evidence for genetic but not functional redundancy.</title>
        <authorList>
            <person name="Bennett E.P."/>
            <person name="Hassan H."/>
            <person name="Mandel U."/>
            <person name="Hollingsworth M.A."/>
            <person name="Akisawa N."/>
            <person name="Ikematsu Y."/>
            <person name="Merkx G."/>
            <person name="Geurts van Kessel A."/>
            <person name="Olofsson S."/>
            <person name="Clausen H."/>
        </authorList>
    </citation>
    <scope>NUCLEOTIDE SEQUENCE [MRNA]</scope>
    <source>
        <tissue>Gastric carcinoma</tissue>
    </source>
</reference>
<reference key="2">
    <citation type="journal article" date="2005" name="Science">
        <title>The transcriptional landscape of the mammalian genome.</title>
        <authorList>
            <person name="Carninci P."/>
            <person name="Kasukawa T."/>
            <person name="Katayama S."/>
            <person name="Gough J."/>
            <person name="Frith M.C."/>
            <person name="Maeda N."/>
            <person name="Oyama R."/>
            <person name="Ravasi T."/>
            <person name="Lenhard B."/>
            <person name="Wells C."/>
            <person name="Kodzius R."/>
            <person name="Shimokawa K."/>
            <person name="Bajic V.B."/>
            <person name="Brenner S.E."/>
            <person name="Batalov S."/>
            <person name="Forrest A.R."/>
            <person name="Zavolan M."/>
            <person name="Davis M.J."/>
            <person name="Wilming L.G."/>
            <person name="Aidinis V."/>
            <person name="Allen J.E."/>
            <person name="Ambesi-Impiombato A."/>
            <person name="Apweiler R."/>
            <person name="Aturaliya R.N."/>
            <person name="Bailey T.L."/>
            <person name="Bansal M."/>
            <person name="Baxter L."/>
            <person name="Beisel K.W."/>
            <person name="Bersano T."/>
            <person name="Bono H."/>
            <person name="Chalk A.M."/>
            <person name="Chiu K.P."/>
            <person name="Choudhary V."/>
            <person name="Christoffels A."/>
            <person name="Clutterbuck D.R."/>
            <person name="Crowe M.L."/>
            <person name="Dalla E."/>
            <person name="Dalrymple B.P."/>
            <person name="de Bono B."/>
            <person name="Della Gatta G."/>
            <person name="di Bernardo D."/>
            <person name="Down T."/>
            <person name="Engstrom P."/>
            <person name="Fagiolini M."/>
            <person name="Faulkner G."/>
            <person name="Fletcher C.F."/>
            <person name="Fukushima T."/>
            <person name="Furuno M."/>
            <person name="Futaki S."/>
            <person name="Gariboldi M."/>
            <person name="Georgii-Hemming P."/>
            <person name="Gingeras T.R."/>
            <person name="Gojobori T."/>
            <person name="Green R.E."/>
            <person name="Gustincich S."/>
            <person name="Harbers M."/>
            <person name="Hayashi Y."/>
            <person name="Hensch T.K."/>
            <person name="Hirokawa N."/>
            <person name="Hill D."/>
            <person name="Huminiecki L."/>
            <person name="Iacono M."/>
            <person name="Ikeo K."/>
            <person name="Iwama A."/>
            <person name="Ishikawa T."/>
            <person name="Jakt M."/>
            <person name="Kanapin A."/>
            <person name="Katoh M."/>
            <person name="Kawasawa Y."/>
            <person name="Kelso J."/>
            <person name="Kitamura H."/>
            <person name="Kitano H."/>
            <person name="Kollias G."/>
            <person name="Krishnan S.P."/>
            <person name="Kruger A."/>
            <person name="Kummerfeld S.K."/>
            <person name="Kurochkin I.V."/>
            <person name="Lareau L.F."/>
            <person name="Lazarevic D."/>
            <person name="Lipovich L."/>
            <person name="Liu J."/>
            <person name="Liuni S."/>
            <person name="McWilliam S."/>
            <person name="Madan Babu M."/>
            <person name="Madera M."/>
            <person name="Marchionni L."/>
            <person name="Matsuda H."/>
            <person name="Matsuzawa S."/>
            <person name="Miki H."/>
            <person name="Mignone F."/>
            <person name="Miyake S."/>
            <person name="Morris K."/>
            <person name="Mottagui-Tabar S."/>
            <person name="Mulder N."/>
            <person name="Nakano N."/>
            <person name="Nakauchi H."/>
            <person name="Ng P."/>
            <person name="Nilsson R."/>
            <person name="Nishiguchi S."/>
            <person name="Nishikawa S."/>
            <person name="Nori F."/>
            <person name="Ohara O."/>
            <person name="Okazaki Y."/>
            <person name="Orlando V."/>
            <person name="Pang K.C."/>
            <person name="Pavan W.J."/>
            <person name="Pavesi G."/>
            <person name="Pesole G."/>
            <person name="Petrovsky N."/>
            <person name="Piazza S."/>
            <person name="Reed J."/>
            <person name="Reid J.F."/>
            <person name="Ring B.Z."/>
            <person name="Ringwald M."/>
            <person name="Rost B."/>
            <person name="Ruan Y."/>
            <person name="Salzberg S.L."/>
            <person name="Sandelin A."/>
            <person name="Schneider C."/>
            <person name="Schoenbach C."/>
            <person name="Sekiguchi K."/>
            <person name="Semple C.A."/>
            <person name="Seno S."/>
            <person name="Sessa L."/>
            <person name="Sheng Y."/>
            <person name="Shibata Y."/>
            <person name="Shimada H."/>
            <person name="Shimada K."/>
            <person name="Silva D."/>
            <person name="Sinclair B."/>
            <person name="Sperling S."/>
            <person name="Stupka E."/>
            <person name="Sugiura K."/>
            <person name="Sultana R."/>
            <person name="Takenaka Y."/>
            <person name="Taki K."/>
            <person name="Tammoja K."/>
            <person name="Tan S.L."/>
            <person name="Tang S."/>
            <person name="Taylor M.S."/>
            <person name="Tegner J."/>
            <person name="Teichmann S.A."/>
            <person name="Ueda H.R."/>
            <person name="van Nimwegen E."/>
            <person name="Verardo R."/>
            <person name="Wei C.L."/>
            <person name="Yagi K."/>
            <person name="Yamanishi H."/>
            <person name="Zabarovsky E."/>
            <person name="Zhu S."/>
            <person name="Zimmer A."/>
            <person name="Hide W."/>
            <person name="Bult C."/>
            <person name="Grimmond S.M."/>
            <person name="Teasdale R.D."/>
            <person name="Liu E.T."/>
            <person name="Brusic V."/>
            <person name="Quackenbush J."/>
            <person name="Wahlestedt C."/>
            <person name="Mattick J.S."/>
            <person name="Hume D.A."/>
            <person name="Kai C."/>
            <person name="Sasaki D."/>
            <person name="Tomaru Y."/>
            <person name="Fukuda S."/>
            <person name="Kanamori-Katayama M."/>
            <person name="Suzuki M."/>
            <person name="Aoki J."/>
            <person name="Arakawa T."/>
            <person name="Iida J."/>
            <person name="Imamura K."/>
            <person name="Itoh M."/>
            <person name="Kato T."/>
            <person name="Kawaji H."/>
            <person name="Kawagashira N."/>
            <person name="Kawashima T."/>
            <person name="Kojima M."/>
            <person name="Kondo S."/>
            <person name="Konno H."/>
            <person name="Nakano K."/>
            <person name="Ninomiya N."/>
            <person name="Nishio T."/>
            <person name="Okada M."/>
            <person name="Plessy C."/>
            <person name="Shibata K."/>
            <person name="Shiraki T."/>
            <person name="Suzuki S."/>
            <person name="Tagami M."/>
            <person name="Waki K."/>
            <person name="Watahiki A."/>
            <person name="Okamura-Oho Y."/>
            <person name="Suzuki H."/>
            <person name="Kawai J."/>
            <person name="Hayashizaki Y."/>
        </authorList>
    </citation>
    <scope>NUCLEOTIDE SEQUENCE [LARGE SCALE MRNA]</scope>
    <source>
        <strain>C57BL/6J</strain>
        <strain>NOD</strain>
        <tissue>Skin</tissue>
    </source>
</reference>
<reference key="3">
    <citation type="journal article" date="2004" name="Genome Res.">
        <title>The status, quality, and expansion of the NIH full-length cDNA project: the Mammalian Gene Collection (MGC).</title>
        <authorList>
            <consortium name="The MGC Project Team"/>
        </authorList>
    </citation>
    <scope>NUCLEOTIDE SEQUENCE [LARGE SCALE MRNA]</scope>
    <source>
        <tissue>Brain</tissue>
    </source>
</reference>
<protein>
    <recommendedName>
        <fullName>Polypeptide N-acetylgalactosaminyltransferase 6</fullName>
        <ecNumber evidence="5">2.4.1.41</ecNumber>
    </recommendedName>
    <alternativeName>
        <fullName>Polypeptide GalNAc transferase 6</fullName>
        <shortName>GalNAc-T6</shortName>
        <shortName>pp-GaNTase 6</shortName>
    </alternativeName>
    <alternativeName>
        <fullName>Protein-UDP acetylgalactosaminyltransferase 6</fullName>
    </alternativeName>
    <alternativeName>
        <fullName>UDP-GalNAc:polypeptide N-acetylgalactosaminyltransferase 6</fullName>
    </alternativeName>
</protein>
<organism>
    <name type="scientific">Mus musculus</name>
    <name type="common">Mouse</name>
    <dbReference type="NCBI Taxonomy" id="10090"/>
    <lineage>
        <taxon>Eukaryota</taxon>
        <taxon>Metazoa</taxon>
        <taxon>Chordata</taxon>
        <taxon>Craniata</taxon>
        <taxon>Vertebrata</taxon>
        <taxon>Euteleostomi</taxon>
        <taxon>Mammalia</taxon>
        <taxon>Eutheria</taxon>
        <taxon>Euarchontoglires</taxon>
        <taxon>Glires</taxon>
        <taxon>Rodentia</taxon>
        <taxon>Myomorpha</taxon>
        <taxon>Muroidea</taxon>
        <taxon>Muridae</taxon>
        <taxon>Murinae</taxon>
        <taxon>Mus</taxon>
        <taxon>Mus</taxon>
    </lineage>
</organism>
<gene>
    <name type="primary">Galnt6</name>
</gene>
<dbReference type="EC" id="2.4.1.41" evidence="5"/>
<dbReference type="EMBL" id="AJ133523">
    <property type="protein sequence ID" value="CAB55352.1"/>
    <property type="status" value="ALT_FRAME"/>
    <property type="molecule type" value="mRNA"/>
</dbReference>
<dbReference type="EMBL" id="AK028506">
    <property type="protein sequence ID" value="BAC25984.1"/>
    <property type="molecule type" value="mRNA"/>
</dbReference>
<dbReference type="EMBL" id="AK049222">
    <property type="protein sequence ID" value="BAC33618.1"/>
    <property type="molecule type" value="mRNA"/>
</dbReference>
<dbReference type="EMBL" id="AK155008">
    <property type="protein sequence ID" value="BAE32989.1"/>
    <property type="molecule type" value="mRNA"/>
</dbReference>
<dbReference type="EMBL" id="AK159721">
    <property type="protein sequence ID" value="BAE35316.1"/>
    <property type="molecule type" value="mRNA"/>
</dbReference>
<dbReference type="EMBL" id="BC119324">
    <property type="protein sequence ID" value="AAI19325.1"/>
    <property type="molecule type" value="mRNA"/>
</dbReference>
<dbReference type="EMBL" id="BC119326">
    <property type="protein sequence ID" value="AAI19327.1"/>
    <property type="molecule type" value="mRNA"/>
</dbReference>
<dbReference type="CCDS" id="CCDS27843.1"/>
<dbReference type="RefSeq" id="NP_001155239.1">
    <property type="nucleotide sequence ID" value="NM_001161767.1"/>
</dbReference>
<dbReference type="RefSeq" id="NP_001155240.1">
    <property type="nucleotide sequence ID" value="NM_001161768.1"/>
</dbReference>
<dbReference type="RefSeq" id="NP_766039.2">
    <property type="nucleotide sequence ID" value="NM_172451.3"/>
</dbReference>
<dbReference type="RefSeq" id="XP_030104297.1">
    <property type="nucleotide sequence ID" value="XM_030248437.2"/>
</dbReference>
<dbReference type="SMR" id="Q8C7U7"/>
<dbReference type="FunCoup" id="Q8C7U7">
    <property type="interactions" value="122"/>
</dbReference>
<dbReference type="STRING" id="10090.ENSMUSP00000056705"/>
<dbReference type="CAZy" id="CBM13">
    <property type="family name" value="Carbohydrate-Binding Module Family 13"/>
</dbReference>
<dbReference type="CAZy" id="GT27">
    <property type="family name" value="Glycosyltransferase Family 27"/>
</dbReference>
<dbReference type="GlyCosmos" id="Q8C7U7">
    <property type="glycosylation" value="2 sites, No reported glycans"/>
</dbReference>
<dbReference type="GlyGen" id="Q8C7U7">
    <property type="glycosylation" value="2 sites"/>
</dbReference>
<dbReference type="PhosphoSitePlus" id="Q8C7U7"/>
<dbReference type="PaxDb" id="10090-ENSMUSP00000056705"/>
<dbReference type="PeptideAtlas" id="Q8C7U7"/>
<dbReference type="ProteomicsDB" id="267554"/>
<dbReference type="Antibodypedia" id="14380">
    <property type="antibodies" value="198 antibodies from 22 providers"/>
</dbReference>
<dbReference type="DNASU" id="207839"/>
<dbReference type="Ensembl" id="ENSMUST00000052069.12">
    <property type="protein sequence ID" value="ENSMUSP00000056705.6"/>
    <property type="gene ID" value="ENSMUSG00000037280.13"/>
</dbReference>
<dbReference type="Ensembl" id="ENSMUST00000159715.8">
    <property type="protein sequence ID" value="ENSMUSP00000123848.2"/>
    <property type="gene ID" value="ENSMUSG00000037280.13"/>
</dbReference>
<dbReference type="Ensembl" id="ENSMUST00000161514.2">
    <property type="protein sequence ID" value="ENSMUSP00000124793.2"/>
    <property type="gene ID" value="ENSMUSG00000037280.13"/>
</dbReference>
<dbReference type="GeneID" id="207839"/>
<dbReference type="KEGG" id="mmu:207839"/>
<dbReference type="UCSC" id="uc007xrz.2">
    <property type="organism name" value="mouse"/>
</dbReference>
<dbReference type="AGR" id="MGI:1891640"/>
<dbReference type="CTD" id="11226"/>
<dbReference type="MGI" id="MGI:1891640">
    <property type="gene designation" value="Galnt6"/>
</dbReference>
<dbReference type="VEuPathDB" id="HostDB:ENSMUSG00000037280"/>
<dbReference type="eggNOG" id="KOG3736">
    <property type="taxonomic scope" value="Eukaryota"/>
</dbReference>
<dbReference type="GeneTree" id="ENSGT00940000160845"/>
<dbReference type="HOGENOM" id="CLU_013477_0_3_1"/>
<dbReference type="InParanoid" id="Q8C7U7"/>
<dbReference type="OMA" id="SWFLHNI"/>
<dbReference type="OrthoDB" id="416652at2759"/>
<dbReference type="PhylomeDB" id="Q8C7U7"/>
<dbReference type="TreeFam" id="TF313267"/>
<dbReference type="Reactome" id="R-MMU-913709">
    <property type="pathway name" value="O-linked glycosylation of mucins"/>
</dbReference>
<dbReference type="UniPathway" id="UPA00378"/>
<dbReference type="BioGRID-ORCS" id="207839">
    <property type="hits" value="7 hits in 80 CRISPR screens"/>
</dbReference>
<dbReference type="PRO" id="PR:Q8C7U7"/>
<dbReference type="Proteomes" id="UP000000589">
    <property type="component" value="Chromosome 15"/>
</dbReference>
<dbReference type="RNAct" id="Q8C7U7">
    <property type="molecule type" value="protein"/>
</dbReference>
<dbReference type="Bgee" id="ENSMUSG00000037280">
    <property type="expression patterns" value="Expressed in molar tooth and 114 other cell types or tissues"/>
</dbReference>
<dbReference type="GO" id="GO:0000139">
    <property type="term" value="C:Golgi membrane"/>
    <property type="evidence" value="ECO:0007669"/>
    <property type="project" value="UniProtKB-SubCell"/>
</dbReference>
<dbReference type="GO" id="GO:0048471">
    <property type="term" value="C:perinuclear region of cytoplasm"/>
    <property type="evidence" value="ECO:0007669"/>
    <property type="project" value="Ensembl"/>
</dbReference>
<dbReference type="GO" id="GO:0030246">
    <property type="term" value="F:carbohydrate binding"/>
    <property type="evidence" value="ECO:0007669"/>
    <property type="project" value="UniProtKB-KW"/>
</dbReference>
<dbReference type="GO" id="GO:0046872">
    <property type="term" value="F:metal ion binding"/>
    <property type="evidence" value="ECO:0007669"/>
    <property type="project" value="UniProtKB-KW"/>
</dbReference>
<dbReference type="GO" id="GO:0004653">
    <property type="term" value="F:polypeptide N-acetylgalactosaminyltransferase activity"/>
    <property type="evidence" value="ECO:0000314"/>
    <property type="project" value="MGI"/>
</dbReference>
<dbReference type="GO" id="GO:0018243">
    <property type="term" value="P:protein O-linked glycosylation via threonine"/>
    <property type="evidence" value="ECO:0000250"/>
    <property type="project" value="UniProtKB"/>
</dbReference>
<dbReference type="CDD" id="cd02510">
    <property type="entry name" value="pp-GalNAc-T"/>
    <property type="match status" value="1"/>
</dbReference>
<dbReference type="FunFam" id="2.80.10.50:FF:000024">
    <property type="entry name" value="Polypeptide N-acetylgalactosaminyltransferase"/>
    <property type="match status" value="1"/>
</dbReference>
<dbReference type="FunFam" id="3.90.550.10:FF:000039">
    <property type="entry name" value="Polypeptide N-acetylgalactosaminyltransferase"/>
    <property type="match status" value="1"/>
</dbReference>
<dbReference type="Gene3D" id="2.80.10.50">
    <property type="match status" value="1"/>
</dbReference>
<dbReference type="Gene3D" id="3.90.550.10">
    <property type="entry name" value="Spore Coat Polysaccharide Biosynthesis Protein SpsA, Chain A"/>
    <property type="match status" value="1"/>
</dbReference>
<dbReference type="InterPro" id="IPR045885">
    <property type="entry name" value="GalNAc-T"/>
</dbReference>
<dbReference type="InterPro" id="IPR001173">
    <property type="entry name" value="Glyco_trans_2-like"/>
</dbReference>
<dbReference type="InterPro" id="IPR029044">
    <property type="entry name" value="Nucleotide-diphossugar_trans"/>
</dbReference>
<dbReference type="InterPro" id="IPR035992">
    <property type="entry name" value="Ricin_B-like_lectins"/>
</dbReference>
<dbReference type="InterPro" id="IPR000772">
    <property type="entry name" value="Ricin_B_lectin"/>
</dbReference>
<dbReference type="PANTHER" id="PTHR11675">
    <property type="entry name" value="N-ACETYLGALACTOSAMINYLTRANSFERASE"/>
    <property type="match status" value="1"/>
</dbReference>
<dbReference type="PANTHER" id="PTHR11675:SF58">
    <property type="entry name" value="POLYPEPTIDE N-ACETYLGALACTOSAMINYLTRANSFERASE 6"/>
    <property type="match status" value="1"/>
</dbReference>
<dbReference type="Pfam" id="PF00535">
    <property type="entry name" value="Glycos_transf_2"/>
    <property type="match status" value="1"/>
</dbReference>
<dbReference type="Pfam" id="PF00652">
    <property type="entry name" value="Ricin_B_lectin"/>
    <property type="match status" value="1"/>
</dbReference>
<dbReference type="SMART" id="SM00458">
    <property type="entry name" value="RICIN"/>
    <property type="match status" value="1"/>
</dbReference>
<dbReference type="SUPFAM" id="SSF53448">
    <property type="entry name" value="Nucleotide-diphospho-sugar transferases"/>
    <property type="match status" value="1"/>
</dbReference>
<dbReference type="SUPFAM" id="SSF50370">
    <property type="entry name" value="Ricin B-like lectins"/>
    <property type="match status" value="1"/>
</dbReference>
<dbReference type="PROSITE" id="PS50231">
    <property type="entry name" value="RICIN_B_LECTIN"/>
    <property type="match status" value="1"/>
</dbReference>